<protein>
    <recommendedName>
        <fullName evidence="1">Undecaprenyl-diphosphatase</fullName>
        <ecNumber evidence="1">3.6.1.27</ecNumber>
    </recommendedName>
    <alternativeName>
        <fullName evidence="1">Bacitracin resistance protein</fullName>
    </alternativeName>
    <alternativeName>
        <fullName evidence="1">Undecaprenyl pyrophosphate phosphatase</fullName>
    </alternativeName>
</protein>
<name>UPPP_CORGB</name>
<sequence>MNEEITLLAAAADPAATENIGWVQTIVLSIVQGLTEFLPISSSGHLRIISELFWGADAGASFTAVVQLGTEAAVLVFFAKEIWQIITGWFAGVFNKERRGFEYRMGWMIIVATIPVVILGVLGKDLIREALRNMWITASVLILFSLVFILAEKMGKKERDYDKLTMKDAIIMGLAQCLALIPGVSRSGGTISAGLFLGLKREVATKFSFLLAIPAVLGSGLYSLPDAFAPSSGQAASGLQLTVGTLFAFVVGYISIAWLMKFVANHSFSWFAAYRIPAGLLVMLLLALGMLNP</sequence>
<evidence type="ECO:0000255" key="1">
    <source>
        <dbReference type="HAMAP-Rule" id="MF_01006"/>
    </source>
</evidence>
<gene>
    <name evidence="1" type="primary">uppP</name>
    <name type="ordered locus">cgR_1575</name>
</gene>
<organism>
    <name type="scientific">Corynebacterium glutamicum (strain R)</name>
    <dbReference type="NCBI Taxonomy" id="340322"/>
    <lineage>
        <taxon>Bacteria</taxon>
        <taxon>Bacillati</taxon>
        <taxon>Actinomycetota</taxon>
        <taxon>Actinomycetes</taxon>
        <taxon>Mycobacteriales</taxon>
        <taxon>Corynebacteriaceae</taxon>
        <taxon>Corynebacterium</taxon>
    </lineage>
</organism>
<comment type="function">
    <text evidence="1">Catalyzes the dephosphorylation of undecaprenyl diphosphate (UPP). Confers resistance to bacitracin.</text>
</comment>
<comment type="catalytic activity">
    <reaction evidence="1">
        <text>di-trans,octa-cis-undecaprenyl diphosphate + H2O = di-trans,octa-cis-undecaprenyl phosphate + phosphate + H(+)</text>
        <dbReference type="Rhea" id="RHEA:28094"/>
        <dbReference type="ChEBI" id="CHEBI:15377"/>
        <dbReference type="ChEBI" id="CHEBI:15378"/>
        <dbReference type="ChEBI" id="CHEBI:43474"/>
        <dbReference type="ChEBI" id="CHEBI:58405"/>
        <dbReference type="ChEBI" id="CHEBI:60392"/>
        <dbReference type="EC" id="3.6.1.27"/>
    </reaction>
</comment>
<comment type="subcellular location">
    <subcellularLocation>
        <location evidence="1">Cell membrane</location>
        <topology evidence="1">Multi-pass membrane protein</topology>
    </subcellularLocation>
</comment>
<comment type="miscellaneous">
    <text>Bacitracin is thought to be involved in the inhibition of peptidoglycan synthesis by sequestering undecaprenyl diphosphate, thereby reducing the pool of lipid carrier available.</text>
</comment>
<comment type="similarity">
    <text evidence="1">Belongs to the UppP family.</text>
</comment>
<keyword id="KW-0046">Antibiotic resistance</keyword>
<keyword id="KW-1003">Cell membrane</keyword>
<keyword id="KW-0133">Cell shape</keyword>
<keyword id="KW-0961">Cell wall biogenesis/degradation</keyword>
<keyword id="KW-0378">Hydrolase</keyword>
<keyword id="KW-0472">Membrane</keyword>
<keyword id="KW-0573">Peptidoglycan synthesis</keyword>
<keyword id="KW-0812">Transmembrane</keyword>
<keyword id="KW-1133">Transmembrane helix</keyword>
<reference key="1">
    <citation type="journal article" date="2007" name="Microbiology">
        <title>Comparative analysis of the Corynebacterium glutamicum group and complete genome sequence of strain R.</title>
        <authorList>
            <person name="Yukawa H."/>
            <person name="Omumasaba C.A."/>
            <person name="Nonaka H."/>
            <person name="Kos P."/>
            <person name="Okai N."/>
            <person name="Suzuki N."/>
            <person name="Suda M."/>
            <person name="Tsuge Y."/>
            <person name="Watanabe J."/>
            <person name="Ikeda Y."/>
            <person name="Vertes A.A."/>
            <person name="Inui M."/>
        </authorList>
    </citation>
    <scope>NUCLEOTIDE SEQUENCE [LARGE SCALE GENOMIC DNA]</scope>
    <source>
        <strain>R</strain>
    </source>
</reference>
<feature type="chain" id="PRO_0000303025" description="Undecaprenyl-diphosphatase">
    <location>
        <begin position="1"/>
        <end position="293"/>
    </location>
</feature>
<feature type="transmembrane region" description="Helical" evidence="1">
    <location>
        <begin position="74"/>
        <end position="94"/>
    </location>
</feature>
<feature type="transmembrane region" description="Helical" evidence="1">
    <location>
        <begin position="107"/>
        <end position="127"/>
    </location>
</feature>
<feature type="transmembrane region" description="Helical" evidence="1">
    <location>
        <begin position="134"/>
        <end position="154"/>
    </location>
</feature>
<feature type="transmembrane region" description="Helical" evidence="1">
    <location>
        <begin position="209"/>
        <end position="229"/>
    </location>
</feature>
<feature type="transmembrane region" description="Helical" evidence="1">
    <location>
        <begin position="243"/>
        <end position="263"/>
    </location>
</feature>
<feature type="transmembrane region" description="Helical" evidence="1">
    <location>
        <begin position="271"/>
        <end position="291"/>
    </location>
</feature>
<accession>A4QEA1</accession>
<proteinExistence type="inferred from homology"/>
<dbReference type="EC" id="3.6.1.27" evidence="1"/>
<dbReference type="EMBL" id="AP009044">
    <property type="protein sequence ID" value="BAF54567.1"/>
    <property type="molecule type" value="Genomic_DNA"/>
</dbReference>
<dbReference type="RefSeq" id="WP_011897266.1">
    <property type="nucleotide sequence ID" value="NC_009342.1"/>
</dbReference>
<dbReference type="SMR" id="A4QEA1"/>
<dbReference type="KEGG" id="cgt:cgR_1575"/>
<dbReference type="HOGENOM" id="CLU_060296_1_0_11"/>
<dbReference type="PhylomeDB" id="A4QEA1"/>
<dbReference type="Proteomes" id="UP000006698">
    <property type="component" value="Chromosome"/>
</dbReference>
<dbReference type="GO" id="GO:0005886">
    <property type="term" value="C:plasma membrane"/>
    <property type="evidence" value="ECO:0007669"/>
    <property type="project" value="UniProtKB-SubCell"/>
</dbReference>
<dbReference type="GO" id="GO:0050380">
    <property type="term" value="F:undecaprenyl-diphosphatase activity"/>
    <property type="evidence" value="ECO:0007669"/>
    <property type="project" value="UniProtKB-UniRule"/>
</dbReference>
<dbReference type="GO" id="GO:0071555">
    <property type="term" value="P:cell wall organization"/>
    <property type="evidence" value="ECO:0007669"/>
    <property type="project" value="UniProtKB-KW"/>
</dbReference>
<dbReference type="GO" id="GO:0009252">
    <property type="term" value="P:peptidoglycan biosynthetic process"/>
    <property type="evidence" value="ECO:0007669"/>
    <property type="project" value="UniProtKB-KW"/>
</dbReference>
<dbReference type="GO" id="GO:0008360">
    <property type="term" value="P:regulation of cell shape"/>
    <property type="evidence" value="ECO:0007669"/>
    <property type="project" value="UniProtKB-KW"/>
</dbReference>
<dbReference type="GO" id="GO:0046677">
    <property type="term" value="P:response to antibiotic"/>
    <property type="evidence" value="ECO:0007669"/>
    <property type="project" value="UniProtKB-UniRule"/>
</dbReference>
<dbReference type="HAMAP" id="MF_01006">
    <property type="entry name" value="Undec_diphosphatase"/>
    <property type="match status" value="1"/>
</dbReference>
<dbReference type="InterPro" id="IPR003824">
    <property type="entry name" value="UppP"/>
</dbReference>
<dbReference type="NCBIfam" id="NF001392">
    <property type="entry name" value="PRK00281.2-1"/>
    <property type="match status" value="1"/>
</dbReference>
<dbReference type="NCBIfam" id="TIGR00753">
    <property type="entry name" value="undec_PP_bacA"/>
    <property type="match status" value="1"/>
</dbReference>
<dbReference type="PANTHER" id="PTHR30622">
    <property type="entry name" value="UNDECAPRENYL-DIPHOSPHATASE"/>
    <property type="match status" value="1"/>
</dbReference>
<dbReference type="PANTHER" id="PTHR30622:SF4">
    <property type="entry name" value="UNDECAPRENYL-DIPHOSPHATASE"/>
    <property type="match status" value="1"/>
</dbReference>
<dbReference type="Pfam" id="PF02673">
    <property type="entry name" value="BacA"/>
    <property type="match status" value="1"/>
</dbReference>